<feature type="chain" id="PRO_1000129871" description="GMP reductase">
    <location>
        <begin position="1"/>
        <end position="347"/>
    </location>
</feature>
<feature type="active site" description="Thioimidate intermediate" evidence="1">
    <location>
        <position position="186"/>
    </location>
</feature>
<feature type="binding site" evidence="1">
    <location>
        <begin position="108"/>
        <end position="131"/>
    </location>
    <ligand>
        <name>NADP(+)</name>
        <dbReference type="ChEBI" id="CHEBI:58349"/>
    </ligand>
</feature>
<feature type="binding site" evidence="1">
    <location>
        <position position="181"/>
    </location>
    <ligand>
        <name>K(+)</name>
        <dbReference type="ChEBI" id="CHEBI:29103"/>
    </ligand>
</feature>
<feature type="binding site" evidence="1">
    <location>
        <position position="183"/>
    </location>
    <ligand>
        <name>K(+)</name>
        <dbReference type="ChEBI" id="CHEBI:29103"/>
    </ligand>
</feature>
<feature type="binding site" evidence="1">
    <location>
        <begin position="216"/>
        <end position="239"/>
    </location>
    <ligand>
        <name>NADP(+)</name>
        <dbReference type="ChEBI" id="CHEBI:58349"/>
    </ligand>
</feature>
<evidence type="ECO:0000255" key="1">
    <source>
        <dbReference type="HAMAP-Rule" id="MF_00596"/>
    </source>
</evidence>
<proteinExistence type="inferred from homology"/>
<keyword id="KW-0479">Metal-binding</keyword>
<keyword id="KW-0521">NADP</keyword>
<keyword id="KW-0560">Oxidoreductase</keyword>
<keyword id="KW-0630">Potassium</keyword>
<dbReference type="EC" id="1.7.1.7" evidence="1"/>
<dbReference type="EMBL" id="CP000901">
    <property type="protein sequence ID" value="ABX87794.1"/>
    <property type="molecule type" value="Genomic_DNA"/>
</dbReference>
<dbReference type="RefSeq" id="WP_002209320.1">
    <property type="nucleotide sequence ID" value="NZ_CP009935.1"/>
</dbReference>
<dbReference type="SMR" id="A9R1J4"/>
<dbReference type="KEGG" id="ypg:YpAngola_A1044"/>
<dbReference type="PATRIC" id="fig|349746.12.peg.1990"/>
<dbReference type="GO" id="GO:0005829">
    <property type="term" value="C:cytosol"/>
    <property type="evidence" value="ECO:0007669"/>
    <property type="project" value="TreeGrafter"/>
</dbReference>
<dbReference type="GO" id="GO:1902560">
    <property type="term" value="C:GMP reductase complex"/>
    <property type="evidence" value="ECO:0007669"/>
    <property type="project" value="InterPro"/>
</dbReference>
<dbReference type="GO" id="GO:0003920">
    <property type="term" value="F:GMP reductase activity"/>
    <property type="evidence" value="ECO:0007669"/>
    <property type="project" value="UniProtKB-UniRule"/>
</dbReference>
<dbReference type="GO" id="GO:0046872">
    <property type="term" value="F:metal ion binding"/>
    <property type="evidence" value="ECO:0007669"/>
    <property type="project" value="UniProtKB-KW"/>
</dbReference>
<dbReference type="GO" id="GO:0006163">
    <property type="term" value="P:purine nucleotide metabolic process"/>
    <property type="evidence" value="ECO:0007669"/>
    <property type="project" value="UniProtKB-UniRule"/>
</dbReference>
<dbReference type="CDD" id="cd00381">
    <property type="entry name" value="IMPDH"/>
    <property type="match status" value="1"/>
</dbReference>
<dbReference type="FunFam" id="3.20.20.70:FF:000012">
    <property type="entry name" value="GMP reductase"/>
    <property type="match status" value="1"/>
</dbReference>
<dbReference type="Gene3D" id="3.20.20.70">
    <property type="entry name" value="Aldolase class I"/>
    <property type="match status" value="1"/>
</dbReference>
<dbReference type="HAMAP" id="MF_00596">
    <property type="entry name" value="GMP_reduct_type1"/>
    <property type="match status" value="1"/>
</dbReference>
<dbReference type="InterPro" id="IPR013785">
    <property type="entry name" value="Aldolase_TIM"/>
</dbReference>
<dbReference type="InterPro" id="IPR050139">
    <property type="entry name" value="GMP_reductase"/>
</dbReference>
<dbReference type="InterPro" id="IPR005993">
    <property type="entry name" value="GMPR"/>
</dbReference>
<dbReference type="InterPro" id="IPR015875">
    <property type="entry name" value="IMP_DH/GMP_Rdtase_CS"/>
</dbReference>
<dbReference type="InterPro" id="IPR001093">
    <property type="entry name" value="IMP_DH_GMPRt"/>
</dbReference>
<dbReference type="NCBIfam" id="TIGR01305">
    <property type="entry name" value="GMP_reduct_1"/>
    <property type="match status" value="1"/>
</dbReference>
<dbReference type="NCBIfam" id="NF003470">
    <property type="entry name" value="PRK05096.1"/>
    <property type="match status" value="1"/>
</dbReference>
<dbReference type="PANTHER" id="PTHR43170">
    <property type="entry name" value="GMP REDUCTASE"/>
    <property type="match status" value="1"/>
</dbReference>
<dbReference type="PANTHER" id="PTHR43170:SF5">
    <property type="entry name" value="GMP REDUCTASE"/>
    <property type="match status" value="1"/>
</dbReference>
<dbReference type="Pfam" id="PF00478">
    <property type="entry name" value="IMPDH"/>
    <property type="match status" value="1"/>
</dbReference>
<dbReference type="PIRSF" id="PIRSF000235">
    <property type="entry name" value="GMP_reductase"/>
    <property type="match status" value="1"/>
</dbReference>
<dbReference type="SMART" id="SM01240">
    <property type="entry name" value="IMPDH"/>
    <property type="match status" value="1"/>
</dbReference>
<dbReference type="SUPFAM" id="SSF51412">
    <property type="entry name" value="Inosine monophosphate dehydrogenase (IMPDH)"/>
    <property type="match status" value="1"/>
</dbReference>
<dbReference type="PROSITE" id="PS00487">
    <property type="entry name" value="IMP_DH_GMP_RED"/>
    <property type="match status" value="1"/>
</dbReference>
<accession>A9R1J4</accession>
<gene>
    <name evidence="1" type="primary">guaC</name>
    <name type="ordered locus">YpAngola_A1044</name>
</gene>
<reference key="1">
    <citation type="journal article" date="2010" name="J. Bacteriol.">
        <title>Genome sequence of the deep-rooted Yersinia pestis strain Angola reveals new insights into the evolution and pangenome of the plague bacterium.</title>
        <authorList>
            <person name="Eppinger M."/>
            <person name="Worsham P.L."/>
            <person name="Nikolich M.P."/>
            <person name="Riley D.R."/>
            <person name="Sebastian Y."/>
            <person name="Mou S."/>
            <person name="Achtman M."/>
            <person name="Lindler L.E."/>
            <person name="Ravel J."/>
        </authorList>
    </citation>
    <scope>NUCLEOTIDE SEQUENCE [LARGE SCALE GENOMIC DNA]</scope>
    <source>
        <strain>Angola</strain>
    </source>
</reference>
<comment type="function">
    <text evidence="1">Catalyzes the irreversible NADPH-dependent deamination of GMP to IMP. It functions in the conversion of nucleobase, nucleoside and nucleotide derivatives of G to A nucleotides, and in maintaining the intracellular balance of A and G nucleotides.</text>
</comment>
<comment type="catalytic activity">
    <reaction evidence="1">
        <text>IMP + NH4(+) + NADP(+) = GMP + NADPH + 2 H(+)</text>
        <dbReference type="Rhea" id="RHEA:17185"/>
        <dbReference type="ChEBI" id="CHEBI:15378"/>
        <dbReference type="ChEBI" id="CHEBI:28938"/>
        <dbReference type="ChEBI" id="CHEBI:57783"/>
        <dbReference type="ChEBI" id="CHEBI:58053"/>
        <dbReference type="ChEBI" id="CHEBI:58115"/>
        <dbReference type="ChEBI" id="CHEBI:58349"/>
        <dbReference type="EC" id="1.7.1.7"/>
    </reaction>
</comment>
<comment type="subunit">
    <text evidence="1">Homotetramer.</text>
</comment>
<comment type="similarity">
    <text evidence="1">Belongs to the IMPDH/GMPR family. GuaC type 1 subfamily.</text>
</comment>
<sequence length="347" mass="37492">MRIEEGLKLGFKDVLIRPKRSTLKSRSEVALERQFTFKHSGWNWSGVPIIAANMDTVGTFRMAEVLASFDILTAVHKHYTLEQWAEFVKRSPESVLRHVMVSTGTSSADFDKMKQILALSPSLKFICIDVANGYSEHFVSFLQRAREACPDKVICAGNVVTGEMVEELILSGADIVKVGIGPGSVCTTRVKTGVGYPQLSAVIECADAAHGLGGQIVSDGGCSVPGDVAKAFGGGADFVMLGGMLAGHDECEGRVVEENGEKFMLFYGMSSESAMKRHVGGVAQYRAAEGKTVKLPLRGSVDNTVRDIMGGLRSACTYVGASHLKELTKRTTFIRVAEQENRVFGTD</sequence>
<name>GUAC_YERPG</name>
<organism>
    <name type="scientific">Yersinia pestis bv. Antiqua (strain Angola)</name>
    <dbReference type="NCBI Taxonomy" id="349746"/>
    <lineage>
        <taxon>Bacteria</taxon>
        <taxon>Pseudomonadati</taxon>
        <taxon>Pseudomonadota</taxon>
        <taxon>Gammaproteobacteria</taxon>
        <taxon>Enterobacterales</taxon>
        <taxon>Yersiniaceae</taxon>
        <taxon>Yersinia</taxon>
    </lineage>
</organism>
<protein>
    <recommendedName>
        <fullName evidence="1">GMP reductase</fullName>
        <ecNumber evidence="1">1.7.1.7</ecNumber>
    </recommendedName>
    <alternativeName>
        <fullName evidence="1">Guanosine 5'-monophosphate oxidoreductase</fullName>
        <shortName evidence="1">Guanosine monophosphate reductase</shortName>
    </alternativeName>
</protein>